<sequence>MTIDAKHYDVIVAPVITEKATMASEYNKVVFKVTRKATKPQIKEAVEKLFDVKVKSVNTLVRKGKAKVFRGSFGSQSDSKRAVVTLEEGHRIDVTTGL</sequence>
<proteinExistence type="inferred from homology"/>
<dbReference type="EMBL" id="CP000319">
    <property type="protein sequence ID" value="ABE62369.1"/>
    <property type="molecule type" value="Genomic_DNA"/>
</dbReference>
<dbReference type="RefSeq" id="WP_011510056.1">
    <property type="nucleotide sequence ID" value="NC_007964.1"/>
</dbReference>
<dbReference type="SMR" id="Q1QN28"/>
<dbReference type="STRING" id="323097.Nham_1547"/>
<dbReference type="KEGG" id="nha:Nham_1547"/>
<dbReference type="eggNOG" id="COG0089">
    <property type="taxonomic scope" value="Bacteria"/>
</dbReference>
<dbReference type="HOGENOM" id="CLU_037562_3_1_5"/>
<dbReference type="OrthoDB" id="9793353at2"/>
<dbReference type="Proteomes" id="UP000001953">
    <property type="component" value="Chromosome"/>
</dbReference>
<dbReference type="GO" id="GO:1990904">
    <property type="term" value="C:ribonucleoprotein complex"/>
    <property type="evidence" value="ECO:0007669"/>
    <property type="project" value="UniProtKB-KW"/>
</dbReference>
<dbReference type="GO" id="GO:0005840">
    <property type="term" value="C:ribosome"/>
    <property type="evidence" value="ECO:0007669"/>
    <property type="project" value="UniProtKB-KW"/>
</dbReference>
<dbReference type="GO" id="GO:0019843">
    <property type="term" value="F:rRNA binding"/>
    <property type="evidence" value="ECO:0007669"/>
    <property type="project" value="UniProtKB-UniRule"/>
</dbReference>
<dbReference type="GO" id="GO:0003735">
    <property type="term" value="F:structural constituent of ribosome"/>
    <property type="evidence" value="ECO:0007669"/>
    <property type="project" value="InterPro"/>
</dbReference>
<dbReference type="GO" id="GO:0006412">
    <property type="term" value="P:translation"/>
    <property type="evidence" value="ECO:0007669"/>
    <property type="project" value="UniProtKB-UniRule"/>
</dbReference>
<dbReference type="FunFam" id="3.30.70.330:FF:000001">
    <property type="entry name" value="50S ribosomal protein L23"/>
    <property type="match status" value="1"/>
</dbReference>
<dbReference type="Gene3D" id="3.30.70.330">
    <property type="match status" value="1"/>
</dbReference>
<dbReference type="HAMAP" id="MF_01369_B">
    <property type="entry name" value="Ribosomal_uL23_B"/>
    <property type="match status" value="1"/>
</dbReference>
<dbReference type="InterPro" id="IPR012677">
    <property type="entry name" value="Nucleotide-bd_a/b_plait_sf"/>
</dbReference>
<dbReference type="InterPro" id="IPR013025">
    <property type="entry name" value="Ribosomal_uL23-like"/>
</dbReference>
<dbReference type="InterPro" id="IPR012678">
    <property type="entry name" value="Ribosomal_uL23/eL15/eS24_sf"/>
</dbReference>
<dbReference type="InterPro" id="IPR001014">
    <property type="entry name" value="Ribosomal_uL23_CS"/>
</dbReference>
<dbReference type="NCBIfam" id="NF004359">
    <property type="entry name" value="PRK05738.1-3"/>
    <property type="match status" value="1"/>
</dbReference>
<dbReference type="NCBIfam" id="NF004360">
    <property type="entry name" value="PRK05738.1-5"/>
    <property type="match status" value="1"/>
</dbReference>
<dbReference type="NCBIfam" id="NF004363">
    <property type="entry name" value="PRK05738.2-4"/>
    <property type="match status" value="1"/>
</dbReference>
<dbReference type="PANTHER" id="PTHR11620">
    <property type="entry name" value="60S RIBOSOMAL PROTEIN L23A"/>
    <property type="match status" value="1"/>
</dbReference>
<dbReference type="Pfam" id="PF00276">
    <property type="entry name" value="Ribosomal_L23"/>
    <property type="match status" value="1"/>
</dbReference>
<dbReference type="SUPFAM" id="SSF54189">
    <property type="entry name" value="Ribosomal proteins S24e, L23 and L15e"/>
    <property type="match status" value="1"/>
</dbReference>
<dbReference type="PROSITE" id="PS00050">
    <property type="entry name" value="RIBOSOMAL_L23"/>
    <property type="match status" value="1"/>
</dbReference>
<evidence type="ECO:0000255" key="1">
    <source>
        <dbReference type="HAMAP-Rule" id="MF_01369"/>
    </source>
</evidence>
<evidence type="ECO:0000305" key="2"/>
<reference key="1">
    <citation type="submission" date="2006-03" db="EMBL/GenBank/DDBJ databases">
        <title>Complete sequence of chromosome of Nitrobacter hamburgensis X14.</title>
        <authorList>
            <consortium name="US DOE Joint Genome Institute"/>
            <person name="Copeland A."/>
            <person name="Lucas S."/>
            <person name="Lapidus A."/>
            <person name="Barry K."/>
            <person name="Detter J.C."/>
            <person name="Glavina del Rio T."/>
            <person name="Hammon N."/>
            <person name="Israni S."/>
            <person name="Dalin E."/>
            <person name="Tice H."/>
            <person name="Pitluck S."/>
            <person name="Chain P."/>
            <person name="Malfatti S."/>
            <person name="Shin M."/>
            <person name="Vergez L."/>
            <person name="Schmutz J."/>
            <person name="Larimer F."/>
            <person name="Land M."/>
            <person name="Hauser L."/>
            <person name="Kyrpides N."/>
            <person name="Ivanova N."/>
            <person name="Ward B."/>
            <person name="Arp D."/>
            <person name="Klotz M."/>
            <person name="Stein L."/>
            <person name="O'Mullan G."/>
            <person name="Starkenburg S."/>
            <person name="Sayavedra L."/>
            <person name="Poret-Peterson A.T."/>
            <person name="Gentry M.E."/>
            <person name="Bruce D."/>
            <person name="Richardson P."/>
        </authorList>
    </citation>
    <scope>NUCLEOTIDE SEQUENCE [LARGE SCALE GENOMIC DNA]</scope>
    <source>
        <strain>DSM 10229 / NCIMB 13809 / X14</strain>
    </source>
</reference>
<organism>
    <name type="scientific">Nitrobacter hamburgensis (strain DSM 10229 / NCIMB 13809 / X14)</name>
    <dbReference type="NCBI Taxonomy" id="323097"/>
    <lineage>
        <taxon>Bacteria</taxon>
        <taxon>Pseudomonadati</taxon>
        <taxon>Pseudomonadota</taxon>
        <taxon>Alphaproteobacteria</taxon>
        <taxon>Hyphomicrobiales</taxon>
        <taxon>Nitrobacteraceae</taxon>
        <taxon>Nitrobacter</taxon>
    </lineage>
</organism>
<name>RL23_NITHX</name>
<comment type="function">
    <text evidence="1">One of the early assembly proteins it binds 23S rRNA. One of the proteins that surrounds the polypeptide exit tunnel on the outside of the ribosome. Forms the main docking site for trigger factor binding to the ribosome.</text>
</comment>
<comment type="subunit">
    <text evidence="1">Part of the 50S ribosomal subunit. Contacts protein L29, and trigger factor when it is bound to the ribosome.</text>
</comment>
<comment type="similarity">
    <text evidence="1">Belongs to the universal ribosomal protein uL23 family.</text>
</comment>
<keyword id="KW-1185">Reference proteome</keyword>
<keyword id="KW-0687">Ribonucleoprotein</keyword>
<keyword id="KW-0689">Ribosomal protein</keyword>
<keyword id="KW-0694">RNA-binding</keyword>
<keyword id="KW-0699">rRNA-binding</keyword>
<protein>
    <recommendedName>
        <fullName evidence="1">Large ribosomal subunit protein uL23</fullName>
    </recommendedName>
    <alternativeName>
        <fullName evidence="2">50S ribosomal protein L23</fullName>
    </alternativeName>
</protein>
<feature type="chain" id="PRO_0000272784" description="Large ribosomal subunit protein uL23">
    <location>
        <begin position="1"/>
        <end position="98"/>
    </location>
</feature>
<accession>Q1QN28</accession>
<gene>
    <name evidence="1" type="primary">rplW</name>
    <name type="ordered locus">Nham_1547</name>
</gene>